<evidence type="ECO:0000250" key="1">
    <source>
        <dbReference type="UniProtKB" id="P84927"/>
    </source>
</evidence>
<evidence type="ECO:0000269" key="2">
    <source>
    </source>
</evidence>
<evidence type="ECO:0000303" key="3">
    <source>
    </source>
</evidence>
<evidence type="ECO:0000305" key="4"/>
<evidence type="ECO:0000305" key="5">
    <source>
    </source>
</evidence>
<sequence>ALWKDVLKKIGTVALHAGKAALGAVADTISE</sequence>
<name>DRS72_PHYTB</name>
<dbReference type="GO" id="GO:0005576">
    <property type="term" value="C:extracellular region"/>
    <property type="evidence" value="ECO:0007669"/>
    <property type="project" value="UniProtKB-SubCell"/>
</dbReference>
<dbReference type="GO" id="GO:0006952">
    <property type="term" value="P:defense response"/>
    <property type="evidence" value="ECO:0007669"/>
    <property type="project" value="UniProtKB-KW"/>
</dbReference>
<dbReference type="InterPro" id="IPR022731">
    <property type="entry name" value="Dermaseptin_dom"/>
</dbReference>
<dbReference type="Pfam" id="PF12121">
    <property type="entry name" value="DD_K"/>
    <property type="match status" value="1"/>
</dbReference>
<protein>
    <recommendedName>
        <fullName evidence="3">Dermaseptin-7.2TR</fullName>
    </recommendedName>
</protein>
<keyword id="KW-0027">Amidation</keyword>
<keyword id="KW-0878">Amphibian defense peptide</keyword>
<keyword id="KW-0929">Antimicrobial</keyword>
<keyword id="KW-0903">Direct protein sequencing</keyword>
<keyword id="KW-0964">Secreted</keyword>
<feature type="peptide" id="PRO_0000445221" description="Dermaseptin-7.2TR" evidence="2">
    <location>
        <begin position="1"/>
        <end position="31"/>
    </location>
</feature>
<feature type="modified residue" description="Glutamic acid 1-amide" evidence="2">
    <location>
        <position position="31"/>
    </location>
</feature>
<organism evidence="3">
    <name type="scientific">Phyllomedusa trinitatis</name>
    <name type="common">Trinidad leaf frog</name>
    <dbReference type="NCBI Taxonomy" id="332092"/>
    <lineage>
        <taxon>Eukaryota</taxon>
        <taxon>Metazoa</taxon>
        <taxon>Chordata</taxon>
        <taxon>Craniata</taxon>
        <taxon>Vertebrata</taxon>
        <taxon>Euteleostomi</taxon>
        <taxon>Amphibia</taxon>
        <taxon>Batrachia</taxon>
        <taxon>Anura</taxon>
        <taxon>Neobatrachia</taxon>
        <taxon>Hyloidea</taxon>
        <taxon>Hylidae</taxon>
        <taxon>Phyllomedusinae</taxon>
        <taxon>Phyllomedusa</taxon>
    </lineage>
</organism>
<comment type="function">
    <text evidence="1">Has antimicrobial activity.</text>
</comment>
<comment type="subcellular location">
    <subcellularLocation>
        <location evidence="2">Secreted</location>
    </subcellularLocation>
</comment>
<comment type="tissue specificity">
    <text evidence="5">Expressed by the skin glands.</text>
</comment>
<comment type="mass spectrometry"/>
<comment type="similarity">
    <text evidence="4">Belongs to the frog skin active peptide (FSAP) family. Dermaseptin subfamily.</text>
</comment>
<proteinExistence type="evidence at protein level"/>
<reference evidence="4" key="1">
    <citation type="journal article" date="2018" name="Comp. Biochem. Physiol.">
        <title>Peptidomic analysis of the host-defense peptides in skin secretions of the Trinidadian leaf frog Phyllomedusa trinitatis (Phyllomedusidae).</title>
        <authorList>
            <person name="Mechkarska M."/>
            <person name="Coquet L."/>
            <person name="Leprince J."/>
            <person name="Auguste R.J."/>
            <person name="Jouenne T."/>
            <person name="Mangoni M.L."/>
            <person name="Conlon J.M."/>
        </authorList>
    </citation>
    <scope>PROTEIN SEQUENCE</scope>
    <scope>SUBCELLULAR LOCATION</scope>
    <scope>MASS SPECTROMETRY</scope>
    <scope>AMIDATION AT GLU-31</scope>
    <source>
        <tissue evidence="3">Skin secretion</tissue>
    </source>
</reference>
<accession>C0HLD3</accession>